<accession>A8APU2</accession>
<sequence>MSAIAPGMILFAYLCGSISSAILVCRIAGLPDPRQSGSGNPGATNVLRIGGKGAAVAVLIFDVLKGMLPVWGAYALGVTPFWLGLIAIAACLGHIWPVFFGFKGGKGVATAFGAIAPIGWDLTGVMAGTWLLTVLLSGYSSLGAIVSALIAPFYVWWFKPQFTFPVSMLSCLILLRHHDNIQRLWRRQETKIWTKLKKKREKDPQ</sequence>
<keyword id="KW-0997">Cell inner membrane</keyword>
<keyword id="KW-1003">Cell membrane</keyword>
<keyword id="KW-0444">Lipid biosynthesis</keyword>
<keyword id="KW-0443">Lipid metabolism</keyword>
<keyword id="KW-0472">Membrane</keyword>
<keyword id="KW-0594">Phospholipid biosynthesis</keyword>
<keyword id="KW-1208">Phospholipid metabolism</keyword>
<keyword id="KW-1185">Reference proteome</keyword>
<keyword id="KW-0808">Transferase</keyword>
<keyword id="KW-0812">Transmembrane</keyword>
<keyword id="KW-1133">Transmembrane helix</keyword>
<name>PLSY_CITK8</name>
<organism>
    <name type="scientific">Citrobacter koseri (strain ATCC BAA-895 / CDC 4225-83 / SGSC4696)</name>
    <dbReference type="NCBI Taxonomy" id="290338"/>
    <lineage>
        <taxon>Bacteria</taxon>
        <taxon>Pseudomonadati</taxon>
        <taxon>Pseudomonadota</taxon>
        <taxon>Gammaproteobacteria</taxon>
        <taxon>Enterobacterales</taxon>
        <taxon>Enterobacteriaceae</taxon>
        <taxon>Citrobacter</taxon>
    </lineage>
</organism>
<evidence type="ECO:0000255" key="1">
    <source>
        <dbReference type="HAMAP-Rule" id="MF_01043"/>
    </source>
</evidence>
<comment type="function">
    <text evidence="1">Catalyzes the transfer of an acyl group from acyl-phosphate (acyl-PO(4)) to glycerol-3-phosphate (G3P) to form lysophosphatidic acid (LPA). This enzyme utilizes acyl-phosphate as fatty acyl donor, but not acyl-CoA or acyl-ACP.</text>
</comment>
<comment type="catalytic activity">
    <reaction evidence="1">
        <text>an acyl phosphate + sn-glycerol 3-phosphate = a 1-acyl-sn-glycero-3-phosphate + phosphate</text>
        <dbReference type="Rhea" id="RHEA:34075"/>
        <dbReference type="ChEBI" id="CHEBI:43474"/>
        <dbReference type="ChEBI" id="CHEBI:57597"/>
        <dbReference type="ChEBI" id="CHEBI:57970"/>
        <dbReference type="ChEBI" id="CHEBI:59918"/>
        <dbReference type="EC" id="2.3.1.275"/>
    </reaction>
</comment>
<comment type="pathway">
    <text evidence="1">Lipid metabolism; phospholipid metabolism.</text>
</comment>
<comment type="subunit">
    <text evidence="1">Probably interacts with PlsX.</text>
</comment>
<comment type="subcellular location">
    <subcellularLocation>
        <location evidence="1">Cell inner membrane</location>
        <topology evidence="1">Multi-pass membrane protein</topology>
    </subcellularLocation>
</comment>
<comment type="similarity">
    <text evidence="1">Belongs to the PlsY family.</text>
</comment>
<gene>
    <name evidence="1" type="primary">plsY</name>
    <name type="ordered locus">CKO_04449</name>
</gene>
<proteinExistence type="inferred from homology"/>
<protein>
    <recommendedName>
        <fullName evidence="1">Glycerol-3-phosphate acyltransferase</fullName>
    </recommendedName>
    <alternativeName>
        <fullName evidence="1">Acyl-PO4 G3P acyltransferase</fullName>
    </alternativeName>
    <alternativeName>
        <fullName evidence="1">Acyl-phosphate--glycerol-3-phosphate acyltransferase</fullName>
    </alternativeName>
    <alternativeName>
        <fullName evidence="1">G3P acyltransferase</fullName>
        <shortName evidence="1">GPAT</shortName>
        <ecNumber evidence="1">2.3.1.275</ecNumber>
    </alternativeName>
    <alternativeName>
        <fullName evidence="1">Lysophosphatidic acid synthase</fullName>
        <shortName evidence="1">LPA synthase</shortName>
    </alternativeName>
</protein>
<reference key="1">
    <citation type="submission" date="2007-08" db="EMBL/GenBank/DDBJ databases">
        <authorList>
            <consortium name="The Citrobacter koseri Genome Sequencing Project"/>
            <person name="McClelland M."/>
            <person name="Sanderson E.K."/>
            <person name="Porwollik S."/>
            <person name="Spieth J."/>
            <person name="Clifton W.S."/>
            <person name="Latreille P."/>
            <person name="Courtney L."/>
            <person name="Wang C."/>
            <person name="Pepin K."/>
            <person name="Bhonagiri V."/>
            <person name="Nash W."/>
            <person name="Johnson M."/>
            <person name="Thiruvilangam P."/>
            <person name="Wilson R."/>
        </authorList>
    </citation>
    <scope>NUCLEOTIDE SEQUENCE [LARGE SCALE GENOMIC DNA]</scope>
    <source>
        <strain>ATCC BAA-895 / CDC 4225-83 / SGSC4696</strain>
    </source>
</reference>
<feature type="chain" id="PRO_1000064167" description="Glycerol-3-phosphate acyltransferase">
    <location>
        <begin position="1"/>
        <end position="205"/>
    </location>
</feature>
<feature type="transmembrane region" description="Helical" evidence="1">
    <location>
        <begin position="4"/>
        <end position="24"/>
    </location>
</feature>
<feature type="transmembrane region" description="Helical" evidence="1">
    <location>
        <begin position="56"/>
        <end position="76"/>
    </location>
</feature>
<feature type="transmembrane region" description="Helical" evidence="1">
    <location>
        <begin position="81"/>
        <end position="101"/>
    </location>
</feature>
<feature type="transmembrane region" description="Helical" evidence="1">
    <location>
        <begin position="112"/>
        <end position="132"/>
    </location>
</feature>
<feature type="transmembrane region" description="Helical" evidence="1">
    <location>
        <begin position="138"/>
        <end position="158"/>
    </location>
</feature>
<dbReference type="EC" id="2.3.1.275" evidence="1"/>
<dbReference type="EMBL" id="CP000822">
    <property type="protein sequence ID" value="ABV15505.1"/>
    <property type="molecule type" value="Genomic_DNA"/>
</dbReference>
<dbReference type="RefSeq" id="WP_012135188.1">
    <property type="nucleotide sequence ID" value="NC_009792.1"/>
</dbReference>
<dbReference type="SMR" id="A8APU2"/>
<dbReference type="STRING" id="290338.CKO_04449"/>
<dbReference type="GeneID" id="45138018"/>
<dbReference type="KEGG" id="cko:CKO_04449"/>
<dbReference type="HOGENOM" id="CLU_081254_0_2_6"/>
<dbReference type="OrthoDB" id="9777124at2"/>
<dbReference type="UniPathway" id="UPA00085"/>
<dbReference type="Proteomes" id="UP000008148">
    <property type="component" value="Chromosome"/>
</dbReference>
<dbReference type="GO" id="GO:0005886">
    <property type="term" value="C:plasma membrane"/>
    <property type="evidence" value="ECO:0007669"/>
    <property type="project" value="UniProtKB-SubCell"/>
</dbReference>
<dbReference type="GO" id="GO:0043772">
    <property type="term" value="F:acyl-phosphate glycerol-3-phosphate acyltransferase activity"/>
    <property type="evidence" value="ECO:0007669"/>
    <property type="project" value="UniProtKB-UniRule"/>
</dbReference>
<dbReference type="GO" id="GO:0008654">
    <property type="term" value="P:phospholipid biosynthetic process"/>
    <property type="evidence" value="ECO:0007669"/>
    <property type="project" value="UniProtKB-UniRule"/>
</dbReference>
<dbReference type="HAMAP" id="MF_01043">
    <property type="entry name" value="PlsY"/>
    <property type="match status" value="1"/>
</dbReference>
<dbReference type="InterPro" id="IPR003811">
    <property type="entry name" value="G3P_acylTferase_PlsY"/>
</dbReference>
<dbReference type="NCBIfam" id="TIGR00023">
    <property type="entry name" value="glycerol-3-phosphate 1-O-acyltransferase PlsY"/>
    <property type="match status" value="1"/>
</dbReference>
<dbReference type="PANTHER" id="PTHR30309:SF0">
    <property type="entry name" value="GLYCEROL-3-PHOSPHATE ACYLTRANSFERASE-RELATED"/>
    <property type="match status" value="1"/>
</dbReference>
<dbReference type="PANTHER" id="PTHR30309">
    <property type="entry name" value="INNER MEMBRANE PROTEIN YGIH"/>
    <property type="match status" value="1"/>
</dbReference>
<dbReference type="Pfam" id="PF02660">
    <property type="entry name" value="G3P_acyltransf"/>
    <property type="match status" value="1"/>
</dbReference>
<dbReference type="SMART" id="SM01207">
    <property type="entry name" value="G3P_acyltransf"/>
    <property type="match status" value="1"/>
</dbReference>